<keyword id="KW-1003">Cell membrane</keyword>
<keyword id="KW-1015">Disulfide bond</keyword>
<keyword id="KW-0325">Glycoprotein</keyword>
<keyword id="KW-0406">Ion transport</keyword>
<keyword id="KW-0472">Membrane</keyword>
<keyword id="KW-0597">Phosphoprotein</keyword>
<keyword id="KW-1185">Reference proteome</keyword>
<keyword id="KW-0915">Sodium</keyword>
<keyword id="KW-0739">Sodium transport</keyword>
<keyword id="KW-0762">Sugar transport</keyword>
<keyword id="KW-0769">Symport</keyword>
<keyword id="KW-0812">Transmembrane</keyword>
<keyword id="KW-1133">Transmembrane helix</keyword>
<keyword id="KW-0813">Transport</keyword>
<reference key="1">
    <citation type="journal article" date="1990" name="Mol. Cell. Biol.">
        <title>Regulation of glucose transporters in LLC-PK1 cells: effects of D-glucose and monosaccharides.</title>
        <authorList>
            <person name="Ohta T."/>
            <person name="Isselbacher K.J."/>
            <person name="Rhoads D.B."/>
        </authorList>
    </citation>
    <scope>NUCLEOTIDE SEQUENCE [MRNA]</scope>
</reference>
<reference key="2">
    <citation type="submission" date="2009-11" db="EMBL/GenBank/DDBJ databases">
        <authorList>
            <consortium name="Porcine genome sequencing project"/>
        </authorList>
    </citation>
    <scope>NUCLEOTIDE SEQUENCE [LARGE SCALE GENOMIC DNA]</scope>
    <source>
        <strain>Duroc</strain>
    </source>
</reference>
<reference key="3">
    <citation type="journal article" date="2016" name="Cell Metab.">
        <title>Bile Diversion in Roux-en-Y Gastric Bypass Modulates Sodium-Dependent Glucose Intestinal Uptake.</title>
        <authorList>
            <person name="Baud G."/>
            <person name="Daoudi M."/>
            <person name="Hubert T."/>
            <person name="Raverdy V."/>
            <person name="Pigeyre M."/>
            <person name="Hervieux E."/>
            <person name="Devienne M."/>
            <person name="Ghunaim M."/>
            <person name="Bonner C."/>
            <person name="Quenon A."/>
            <person name="Pigny P."/>
            <person name="Klein A."/>
            <person name="Kerr-Conte J."/>
            <person name="Gmyr V."/>
            <person name="Caiazzo R."/>
            <person name="Pattou F."/>
        </authorList>
    </citation>
    <scope>NUCLEOTIDE SEQUENCE [MRNA]</scope>
</reference>
<protein>
    <recommendedName>
        <fullName evidence="2">Sodium/glucose cotransporter 1</fullName>
        <shortName>Na(+)/glucose cotransporter 1</shortName>
    </recommendedName>
    <alternativeName>
        <fullName>High affinity sodium-glucose cotransporter</fullName>
    </alternativeName>
    <alternativeName>
        <fullName>Solute carrier family 5 member 1</fullName>
    </alternativeName>
</protein>
<evidence type="ECO:0000250" key="1">
    <source>
        <dbReference type="UniProtKB" id="P11170"/>
    </source>
</evidence>
<evidence type="ECO:0000250" key="2">
    <source>
        <dbReference type="UniProtKB" id="P13866"/>
    </source>
</evidence>
<evidence type="ECO:0000250" key="3">
    <source>
        <dbReference type="UniProtKB" id="Q8C3K6"/>
    </source>
</evidence>
<evidence type="ECO:0000305" key="4"/>
<accession>P26429</accession>
<accession>A0A140H1A0</accession>
<accession>A0A4X1V5B9</accession>
<accession>F1RLV1</accession>
<dbReference type="EMBL" id="KU672520">
    <property type="protein sequence ID" value="AMN88558.1"/>
    <property type="molecule type" value="mRNA"/>
</dbReference>
<dbReference type="EMBL" id="M34044">
    <property type="protein sequence ID" value="AAA31122.1"/>
    <property type="molecule type" value="mRNA"/>
</dbReference>
<dbReference type="PIR" id="A36361">
    <property type="entry name" value="A36361"/>
</dbReference>
<dbReference type="RefSeq" id="NP_001157493.1">
    <property type="nucleotide sequence ID" value="NM_001164021.1"/>
</dbReference>
<dbReference type="SMR" id="P26429"/>
<dbReference type="CORUM" id="P26429"/>
<dbReference type="FunCoup" id="P26429">
    <property type="interactions" value="21"/>
</dbReference>
<dbReference type="STRING" id="9823.ENSSSCP00000010706"/>
<dbReference type="GlyCosmos" id="P26429">
    <property type="glycosylation" value="1 site, No reported glycans"/>
</dbReference>
<dbReference type="GlyGen" id="P26429">
    <property type="glycosylation" value="1 site"/>
</dbReference>
<dbReference type="PaxDb" id="9823-ENSSSCP00000010706"/>
<dbReference type="PeptideAtlas" id="P26429"/>
<dbReference type="Ensembl" id="ENSSSCT00000010993.5">
    <property type="protein sequence ID" value="ENSSSCP00000010706.4"/>
    <property type="gene ID" value="ENSSSCG00000010036.5"/>
</dbReference>
<dbReference type="Ensembl" id="ENSSSCT00085040489">
    <property type="protein sequence ID" value="ENSSSCP00085028330"/>
    <property type="gene ID" value="ENSSSCG00085021230"/>
</dbReference>
<dbReference type="Ensembl" id="ENSSSCT00090034973">
    <property type="protein sequence ID" value="ENSSSCP00090021764"/>
    <property type="gene ID" value="ENSSSCG00090019751"/>
</dbReference>
<dbReference type="Ensembl" id="ENSSSCT00105063720">
    <property type="protein sequence ID" value="ENSSSCP00105045296"/>
    <property type="gene ID" value="ENSSSCG00105033485"/>
</dbReference>
<dbReference type="Ensembl" id="ENSSSCT00110066826">
    <property type="protein sequence ID" value="ENSSSCP00110047080"/>
    <property type="gene ID" value="ENSSSCG00110035129"/>
</dbReference>
<dbReference type="Ensembl" id="ENSSSCT00115012171">
    <property type="protein sequence ID" value="ENSSSCP00115011497"/>
    <property type="gene ID" value="ENSSSCG00115006987"/>
</dbReference>
<dbReference type="Ensembl" id="ENSSSCT00130059784">
    <property type="protein sequence ID" value="ENSSSCP00130042844"/>
    <property type="gene ID" value="ENSSSCG00130030617"/>
</dbReference>
<dbReference type="GeneID" id="397113"/>
<dbReference type="KEGG" id="ssc:397113"/>
<dbReference type="CTD" id="6523"/>
<dbReference type="VGNC" id="VGNC:93140">
    <property type="gene designation" value="SLC5A1"/>
</dbReference>
<dbReference type="eggNOG" id="KOG2349">
    <property type="taxonomic scope" value="Eukaryota"/>
</dbReference>
<dbReference type="GeneTree" id="ENSGT00940000155844"/>
<dbReference type="HOGENOM" id="CLU_018808_9_2_1"/>
<dbReference type="InParanoid" id="P26429"/>
<dbReference type="OMA" id="WHTLLTG"/>
<dbReference type="OrthoDB" id="6132759at2759"/>
<dbReference type="TreeFam" id="TF352855"/>
<dbReference type="Reactome" id="R-SSC-189200">
    <property type="pathway name" value="Cellular hexose transport"/>
</dbReference>
<dbReference type="Reactome" id="R-SSC-8981373">
    <property type="pathway name" value="Intestinal hexose absorption"/>
</dbReference>
<dbReference type="Proteomes" id="UP000008227">
    <property type="component" value="Chromosome 14"/>
</dbReference>
<dbReference type="Proteomes" id="UP000314985">
    <property type="component" value="Unplaced"/>
</dbReference>
<dbReference type="Proteomes" id="UP000694570">
    <property type="component" value="Unplaced"/>
</dbReference>
<dbReference type="Proteomes" id="UP000694571">
    <property type="component" value="Unplaced"/>
</dbReference>
<dbReference type="Proteomes" id="UP000694720">
    <property type="component" value="Unplaced"/>
</dbReference>
<dbReference type="Proteomes" id="UP000694722">
    <property type="component" value="Unplaced"/>
</dbReference>
<dbReference type="Proteomes" id="UP000694723">
    <property type="component" value="Unplaced"/>
</dbReference>
<dbReference type="Proteomes" id="UP000694724">
    <property type="component" value="Unplaced"/>
</dbReference>
<dbReference type="Proteomes" id="UP000694725">
    <property type="component" value="Unplaced"/>
</dbReference>
<dbReference type="Proteomes" id="UP000694726">
    <property type="component" value="Unplaced"/>
</dbReference>
<dbReference type="Proteomes" id="UP000694727">
    <property type="component" value="Unplaced"/>
</dbReference>
<dbReference type="Proteomes" id="UP000694728">
    <property type="component" value="Unplaced"/>
</dbReference>
<dbReference type="Bgee" id="ENSSSCG00000010036">
    <property type="expression patterns" value="Expressed in ileum and 27 other cell types or tissues"/>
</dbReference>
<dbReference type="GO" id="GO:0016324">
    <property type="term" value="C:apical plasma membrane"/>
    <property type="evidence" value="ECO:0000250"/>
    <property type="project" value="UniProtKB"/>
</dbReference>
<dbReference type="GO" id="GO:0005886">
    <property type="term" value="C:plasma membrane"/>
    <property type="evidence" value="ECO:0000318"/>
    <property type="project" value="GO_Central"/>
</dbReference>
<dbReference type="GO" id="GO:0005412">
    <property type="term" value="F:D-glucose:sodium symporter activity"/>
    <property type="evidence" value="ECO:0000250"/>
    <property type="project" value="UniProtKB"/>
</dbReference>
<dbReference type="GO" id="GO:0015371">
    <property type="term" value="F:galactose:sodium symporter activity"/>
    <property type="evidence" value="ECO:0000250"/>
    <property type="project" value="UniProtKB"/>
</dbReference>
<dbReference type="GO" id="GO:0005372">
    <property type="term" value="F:water transmembrane transporter activity"/>
    <property type="evidence" value="ECO:0000250"/>
    <property type="project" value="UniProtKB"/>
</dbReference>
<dbReference type="GO" id="GO:0001951">
    <property type="term" value="P:intestinal D-glucose absorption"/>
    <property type="evidence" value="ECO:0000250"/>
    <property type="project" value="UniProtKB"/>
</dbReference>
<dbReference type="GO" id="GO:0035623">
    <property type="term" value="P:renal D-glucose absorption"/>
    <property type="evidence" value="ECO:0000250"/>
    <property type="project" value="UniProtKB"/>
</dbReference>
<dbReference type="GO" id="GO:0006814">
    <property type="term" value="P:sodium ion transport"/>
    <property type="evidence" value="ECO:0000318"/>
    <property type="project" value="GO_Central"/>
</dbReference>
<dbReference type="FunFam" id="1.20.1730.10:FF:000005">
    <property type="entry name" value="sodium/glucose cotransporter 1 isoform X1"/>
    <property type="match status" value="1"/>
</dbReference>
<dbReference type="Gene3D" id="1.20.1730.10">
    <property type="entry name" value="Sodium/glucose cotransporter"/>
    <property type="match status" value="1"/>
</dbReference>
<dbReference type="InterPro" id="IPR038377">
    <property type="entry name" value="Na/Glc_symporter_sf"/>
</dbReference>
<dbReference type="InterPro" id="IPR001734">
    <property type="entry name" value="Na/solute_symporter"/>
</dbReference>
<dbReference type="InterPro" id="IPR018212">
    <property type="entry name" value="Na/solute_symporter_CS"/>
</dbReference>
<dbReference type="NCBIfam" id="TIGR00813">
    <property type="entry name" value="sss"/>
    <property type="match status" value="1"/>
</dbReference>
<dbReference type="PANTHER" id="PTHR11819:SF151">
    <property type="entry name" value="SODIUM_GLUCOSE COTRANSPORTER 1"/>
    <property type="match status" value="1"/>
</dbReference>
<dbReference type="PANTHER" id="PTHR11819">
    <property type="entry name" value="SOLUTE CARRIER FAMILY 5"/>
    <property type="match status" value="1"/>
</dbReference>
<dbReference type="Pfam" id="PF00474">
    <property type="entry name" value="SSF"/>
    <property type="match status" value="1"/>
</dbReference>
<dbReference type="PROSITE" id="PS00456">
    <property type="entry name" value="NA_SOLUT_SYMP_1"/>
    <property type="match status" value="1"/>
</dbReference>
<dbReference type="PROSITE" id="PS00457">
    <property type="entry name" value="NA_SOLUT_SYMP_2"/>
    <property type="match status" value="1"/>
</dbReference>
<dbReference type="PROSITE" id="PS50283">
    <property type="entry name" value="NA_SOLUT_SYMP_3"/>
    <property type="match status" value="1"/>
</dbReference>
<gene>
    <name type="primary">SLC5A1</name>
    <name evidence="2" type="synonym">SGLT1</name>
</gene>
<comment type="function">
    <text evidence="2 3">Electrogenic Na(+)-coupled sugar symporter that actively transports D-glucose or D-galactose at the plasma membrane, with a Na(+) to sugar coupling ratio of 2:1. Transporter activity is driven by a transmembrane Na(+) electrochemical gradient set by the Na(+)/K(+) pump (By similarity). Has a primary role in the transport of dietary monosaccharides from enterocytes to blood. Responsible for the absorption of D-glucose or D-galactose across the apical brush-border membrane of enterocytes, whereas basolateral exit is provided by GLUT2. Additionally, functions as a D-glucose sensor in enteroendocrine cells, triggering the secretion of the incretins GCG and GIP that control food intake and energy homeostasis (By similarity). Together with SGLT2, functions in reabsorption of D-glucose from glomerular filtrate, playing a nonredundant role in the S3 segment of the proximal tubules (By similarity). Transports D-glucose into endometrial epithelial cells, controlling glycogen synthesis and nutritional support for the embryo as well as the decidual transformation of endometrium prior to conception (By similarity). Acts as a water channel enabling passive water transport in response to the osmotic gradient created upon sugar and Na(+) uptake. Has high water conductivity comparable to aquaporins and therefore is expected to play an important role in transepithelial water permeability, especially in the small intestine.</text>
</comment>
<comment type="catalytic activity">
    <reaction evidence="2">
        <text>D-glucose(out) + 2 Na(+)(out) = D-glucose(in) + 2 Na(+)(in)</text>
        <dbReference type="Rhea" id="RHEA:70495"/>
        <dbReference type="ChEBI" id="CHEBI:4167"/>
        <dbReference type="ChEBI" id="CHEBI:29101"/>
    </reaction>
    <physiologicalReaction direction="left-to-right" evidence="2">
        <dbReference type="Rhea" id="RHEA:70496"/>
    </physiologicalReaction>
</comment>
<comment type="catalytic activity">
    <reaction evidence="2">
        <text>D-galactose(out) + 2 Na(+)(out) = D-galactose(in) + 2 Na(+)(in)</text>
        <dbReference type="Rhea" id="RHEA:70499"/>
        <dbReference type="ChEBI" id="CHEBI:4139"/>
        <dbReference type="ChEBI" id="CHEBI:29101"/>
    </reaction>
    <physiologicalReaction direction="left-to-right" evidence="2">
        <dbReference type="Rhea" id="RHEA:70500"/>
    </physiologicalReaction>
</comment>
<comment type="activity regulation">
    <text evidence="2">Enhanced by the interaction with PDZK1IP1/MAP17; but unlike SLC5A2/SGLT2, PDZK1IP1 is not essential for SLC5A1 transporter activity (By similarity). Possibly modulated by cholesterol binding (By similarity).</text>
</comment>
<comment type="subcellular location">
    <subcellularLocation>
        <location evidence="3">Apical cell membrane</location>
        <topology evidence="2">Multi-pass membrane protein</topology>
    </subcellularLocation>
</comment>
<comment type="domain">
    <text evidence="2">The cholesterol-binding site is formed by transmembrane helices TM1, TM7 and TM13.</text>
</comment>
<comment type="PTM">
    <text evidence="2">N-glycosylation is not necessary for the cotransporter function.</text>
</comment>
<comment type="similarity">
    <text evidence="4">Belongs to the sodium:solute symporter (SSF) (TC 2.A.21) family.</text>
</comment>
<feature type="chain" id="PRO_0000105368" description="Sodium/glucose cotransporter 1">
    <location>
        <begin position="1"/>
        <end position="662"/>
    </location>
</feature>
<feature type="topological domain" description="Extracellular" evidence="2">
    <location>
        <begin position="1"/>
        <end position="24"/>
    </location>
</feature>
<feature type="transmembrane region" description="Helical; Name=TM0" evidence="2">
    <location>
        <begin position="25"/>
        <end position="47"/>
    </location>
</feature>
<feature type="topological domain" description="Cytoplasmic" evidence="2">
    <location>
        <begin position="48"/>
        <end position="66"/>
    </location>
</feature>
<feature type="transmembrane region" description="Helical; Name=TM1" evidence="2">
    <location>
        <begin position="67"/>
        <end position="90"/>
    </location>
</feature>
<feature type="topological domain" description="Extracellular" evidence="2">
    <location>
        <begin position="91"/>
        <end position="95"/>
    </location>
</feature>
<feature type="transmembrane region" description="Helical; Name=TM2" evidence="2">
    <location>
        <begin position="96"/>
        <end position="117"/>
    </location>
</feature>
<feature type="topological domain" description="Cytoplasmic" evidence="2">
    <location>
        <begin position="118"/>
        <end position="139"/>
    </location>
</feature>
<feature type="transmembrane region" description="Helical; Name=TM3" evidence="2">
    <location>
        <begin position="140"/>
        <end position="169"/>
    </location>
</feature>
<feature type="topological domain" description="Extracellular" evidence="2">
    <location>
        <begin position="170"/>
        <end position="176"/>
    </location>
</feature>
<feature type="transmembrane region" description="Helical; Name=TM4" evidence="2">
    <location>
        <begin position="177"/>
        <end position="193"/>
    </location>
</feature>
<feature type="topological domain" description="Cytoplasmic" evidence="2">
    <location>
        <begin position="194"/>
        <end position="202"/>
    </location>
</feature>
<feature type="transmembrane region" description="Helical; Name=TM5" evidence="2">
    <location>
        <begin position="203"/>
        <end position="221"/>
    </location>
</feature>
<feature type="topological domain" description="Extracellular" evidence="2">
    <location>
        <begin position="222"/>
        <end position="275"/>
    </location>
</feature>
<feature type="transmembrane region" description="Helical; Name=TM6" evidence="2">
    <location>
        <begin position="276"/>
        <end position="295"/>
    </location>
</feature>
<feature type="topological domain" description="Cytoplasmic" evidence="2">
    <location>
        <begin position="296"/>
        <end position="309"/>
    </location>
</feature>
<feature type="transmembrane region" description="Helical; Name=TM7" evidence="2">
    <location>
        <begin position="310"/>
        <end position="331"/>
    </location>
</feature>
<feature type="topological domain" description="Extracellular" evidence="2">
    <location>
        <begin position="332"/>
        <end position="375"/>
    </location>
</feature>
<feature type="transmembrane region" description="Helical; Name=TM8" evidence="2">
    <location>
        <begin position="376"/>
        <end position="406"/>
    </location>
</feature>
<feature type="topological domain" description="Cytoplasmic" evidence="2">
    <location>
        <begin position="407"/>
        <end position="422"/>
    </location>
</feature>
<feature type="transmembrane region" description="Helical; Name=TM9" evidence="2">
    <location>
        <begin position="423"/>
        <end position="444"/>
    </location>
</feature>
<feature type="topological domain" description="Extracellular" evidence="2">
    <location>
        <begin position="445"/>
        <end position="451"/>
    </location>
</feature>
<feature type="transmembrane region" description="Helical; Name=TM10" evidence="2">
    <location>
        <begin position="452"/>
        <end position="477"/>
    </location>
</feature>
<feature type="topological domain" description="Cytoplasmic" evidence="2">
    <location>
        <begin position="478"/>
        <end position="481"/>
    </location>
</feature>
<feature type="transmembrane region" description="Helical; Name=TM11" evidence="2">
    <location>
        <begin position="482"/>
        <end position="504"/>
    </location>
</feature>
<feature type="topological domain" description="Extracellular" evidence="2">
    <location>
        <begin position="505"/>
        <end position="525"/>
    </location>
</feature>
<feature type="transmembrane region" description="Helical; Name=TM12" evidence="2">
    <location>
        <begin position="526"/>
        <end position="547"/>
    </location>
</feature>
<feature type="topological domain" description="Cytoplasmic" evidence="2">
    <location>
        <begin position="548"/>
        <end position="642"/>
    </location>
</feature>
<feature type="transmembrane region" description="Helical; Name=TM13" evidence="2">
    <location>
        <begin position="643"/>
        <end position="660"/>
    </location>
</feature>
<feature type="topological domain" description="Extracellular" evidence="2">
    <location>
        <begin position="661"/>
        <end position="662"/>
    </location>
</feature>
<feature type="modified residue" description="Phosphothreonine" evidence="3">
    <location>
        <position position="587"/>
    </location>
</feature>
<feature type="glycosylation site" description="N-linked (GlcNAc...) asparagine" evidence="2">
    <location>
        <position position="248"/>
    </location>
</feature>
<feature type="disulfide bond" evidence="1">
    <location>
        <begin position="255"/>
        <end position="608"/>
    </location>
</feature>
<feature type="disulfide bond" evidence="2">
    <location>
        <begin position="255"/>
        <end position="511"/>
    </location>
</feature>
<feature type="disulfide bond" evidence="2">
    <location>
        <begin position="345"/>
        <end position="351"/>
    </location>
</feature>
<feature type="disulfide bond" evidence="2">
    <location>
        <begin position="355"/>
        <end position="361"/>
    </location>
</feature>
<feature type="disulfide bond" evidence="2">
    <location>
        <begin position="517"/>
        <end position="522"/>
    </location>
</feature>
<organism>
    <name type="scientific">Sus scrofa</name>
    <name type="common">Pig</name>
    <dbReference type="NCBI Taxonomy" id="9823"/>
    <lineage>
        <taxon>Eukaryota</taxon>
        <taxon>Metazoa</taxon>
        <taxon>Chordata</taxon>
        <taxon>Craniata</taxon>
        <taxon>Vertebrata</taxon>
        <taxon>Euteleostomi</taxon>
        <taxon>Mammalia</taxon>
        <taxon>Eutheria</taxon>
        <taxon>Laurasiatheria</taxon>
        <taxon>Artiodactyla</taxon>
        <taxon>Suina</taxon>
        <taxon>Suidae</taxon>
        <taxon>Sus</taxon>
    </lineage>
</organism>
<sequence length="662" mass="73042">MDSSTWSPATTATTEPLKPHERIRNAADISVIVIYFVVVMAVGLWAMCSTNRGTVGGFFLAGRSMVWWPVGASLFASNIGSGHFVGLAGTGAAAGIATGGFEWNALIWVVVLGWLFVPIYIKAGVVTMPEYLRKRFGGKRIQVYLSILSLMLYIFTKISADIFSGAIFITLALGLDLYLAIFLLLAITGLYTITGGLAAVIYTDTLQTAIMLVGSFILTGFAFHEVGGYDAFMEKYMNAIPTVISDGNITIKKECYTPRADSFHIFRDPLKGDLPWPGLTFGLSILALWYWCTDQVIVQRCLSAKNMSHVKAGCVMCGYFKLLPMFVIVMPGMISRVLYTEKIACTVPSECEKYCGTKVGCSNIAYPTLVVELMPNGLRGLMLSVMLASLMSSLTSIFNSASTLFTMDVYTKIRKRASEKELMIAGRLFILVLIGISIAWVPIVQSAQSGQLFDYIQSVTSYLGPPIAAVFLLAIFCKRVNEEGAFWGLVIGCMIGLARMITEFAYGTGSCVEPSNCPTIICGVHYLYFAIILFVISIIIVLVVSLFTKPIPDVHLYRLCWSLRNSKEERIDLDAEEEDIQEAPEETIEIEVPEEKKGCFRRTYDLFCGLDQQKGPKMTKEEEAAMKLKMTDTSEKPLWRTVVNINGIILLTVAVFCHAYFA</sequence>
<proteinExistence type="evidence at transcript level"/>
<name>SC5A1_PIG</name>